<reference key="1">
    <citation type="journal article" date="1996" name="Microbiology">
        <title>Sequence analysis of a 50 kb region between spo0H and rrnH on the Bacillus subtilis chromosome.</title>
        <authorList>
            <person name="Yasumoto K."/>
            <person name="Liu H."/>
            <person name="Jeong S.M."/>
            <person name="Ohashi Y."/>
            <person name="Kakinuma S."/>
            <person name="Tanaka K."/>
            <person name="Kawamura F."/>
            <person name="Yoshikawa H."/>
            <person name="Takahashi H."/>
        </authorList>
    </citation>
    <scope>NUCLEOTIDE SEQUENCE [GENOMIC DNA]</scope>
    <source>
        <strain>168</strain>
    </source>
</reference>
<reference key="2">
    <citation type="journal article" date="1997" name="Nature">
        <title>The complete genome sequence of the Gram-positive bacterium Bacillus subtilis.</title>
        <authorList>
            <person name="Kunst F."/>
            <person name="Ogasawara N."/>
            <person name="Moszer I."/>
            <person name="Albertini A.M."/>
            <person name="Alloni G."/>
            <person name="Azevedo V."/>
            <person name="Bertero M.G."/>
            <person name="Bessieres P."/>
            <person name="Bolotin A."/>
            <person name="Borchert S."/>
            <person name="Borriss R."/>
            <person name="Boursier L."/>
            <person name="Brans A."/>
            <person name="Braun M."/>
            <person name="Brignell S.C."/>
            <person name="Bron S."/>
            <person name="Brouillet S."/>
            <person name="Bruschi C.V."/>
            <person name="Caldwell B."/>
            <person name="Capuano V."/>
            <person name="Carter N.M."/>
            <person name="Choi S.-K."/>
            <person name="Codani J.-J."/>
            <person name="Connerton I.F."/>
            <person name="Cummings N.J."/>
            <person name="Daniel R.A."/>
            <person name="Denizot F."/>
            <person name="Devine K.M."/>
            <person name="Duesterhoeft A."/>
            <person name="Ehrlich S.D."/>
            <person name="Emmerson P.T."/>
            <person name="Entian K.-D."/>
            <person name="Errington J."/>
            <person name="Fabret C."/>
            <person name="Ferrari E."/>
            <person name="Foulger D."/>
            <person name="Fritz C."/>
            <person name="Fujita M."/>
            <person name="Fujita Y."/>
            <person name="Fuma S."/>
            <person name="Galizzi A."/>
            <person name="Galleron N."/>
            <person name="Ghim S.-Y."/>
            <person name="Glaser P."/>
            <person name="Goffeau A."/>
            <person name="Golightly E.J."/>
            <person name="Grandi G."/>
            <person name="Guiseppi G."/>
            <person name="Guy B.J."/>
            <person name="Haga K."/>
            <person name="Haiech J."/>
            <person name="Harwood C.R."/>
            <person name="Henaut A."/>
            <person name="Hilbert H."/>
            <person name="Holsappel S."/>
            <person name="Hosono S."/>
            <person name="Hullo M.-F."/>
            <person name="Itaya M."/>
            <person name="Jones L.-M."/>
            <person name="Joris B."/>
            <person name="Karamata D."/>
            <person name="Kasahara Y."/>
            <person name="Klaerr-Blanchard M."/>
            <person name="Klein C."/>
            <person name="Kobayashi Y."/>
            <person name="Koetter P."/>
            <person name="Koningstein G."/>
            <person name="Krogh S."/>
            <person name="Kumano M."/>
            <person name="Kurita K."/>
            <person name="Lapidus A."/>
            <person name="Lardinois S."/>
            <person name="Lauber J."/>
            <person name="Lazarevic V."/>
            <person name="Lee S.-M."/>
            <person name="Levine A."/>
            <person name="Liu H."/>
            <person name="Masuda S."/>
            <person name="Mauel C."/>
            <person name="Medigue C."/>
            <person name="Medina N."/>
            <person name="Mellado R.P."/>
            <person name="Mizuno M."/>
            <person name="Moestl D."/>
            <person name="Nakai S."/>
            <person name="Noback M."/>
            <person name="Noone D."/>
            <person name="O'Reilly M."/>
            <person name="Ogawa K."/>
            <person name="Ogiwara A."/>
            <person name="Oudega B."/>
            <person name="Park S.-H."/>
            <person name="Parro V."/>
            <person name="Pohl T.M."/>
            <person name="Portetelle D."/>
            <person name="Porwollik S."/>
            <person name="Prescott A.M."/>
            <person name="Presecan E."/>
            <person name="Pujic P."/>
            <person name="Purnelle B."/>
            <person name="Rapoport G."/>
            <person name="Rey M."/>
            <person name="Reynolds S."/>
            <person name="Rieger M."/>
            <person name="Rivolta C."/>
            <person name="Rocha E."/>
            <person name="Roche B."/>
            <person name="Rose M."/>
            <person name="Sadaie Y."/>
            <person name="Sato T."/>
            <person name="Scanlan E."/>
            <person name="Schleich S."/>
            <person name="Schroeter R."/>
            <person name="Scoffone F."/>
            <person name="Sekiguchi J."/>
            <person name="Sekowska A."/>
            <person name="Seror S.J."/>
            <person name="Serror P."/>
            <person name="Shin B.-S."/>
            <person name="Soldo B."/>
            <person name="Sorokin A."/>
            <person name="Tacconi E."/>
            <person name="Takagi T."/>
            <person name="Takahashi H."/>
            <person name="Takemaru K."/>
            <person name="Takeuchi M."/>
            <person name="Tamakoshi A."/>
            <person name="Tanaka T."/>
            <person name="Terpstra P."/>
            <person name="Tognoni A."/>
            <person name="Tosato V."/>
            <person name="Uchiyama S."/>
            <person name="Vandenbol M."/>
            <person name="Vannier F."/>
            <person name="Vassarotti A."/>
            <person name="Viari A."/>
            <person name="Wambutt R."/>
            <person name="Wedler E."/>
            <person name="Wedler H."/>
            <person name="Weitzenegger T."/>
            <person name="Winters P."/>
            <person name="Wipat A."/>
            <person name="Yamamoto H."/>
            <person name="Yamane K."/>
            <person name="Yasumoto K."/>
            <person name="Yata K."/>
            <person name="Yoshida K."/>
            <person name="Yoshikawa H.-F."/>
            <person name="Zumstein E."/>
            <person name="Yoshikawa H."/>
            <person name="Danchin A."/>
        </authorList>
    </citation>
    <scope>NUCLEOTIDE SEQUENCE [LARGE SCALE GENOMIC DNA]</scope>
    <source>
        <strain>168</strain>
    </source>
</reference>
<reference key="3">
    <citation type="journal article" date="2009" name="Microbiology">
        <title>From a consortium sequence to a unified sequence: the Bacillus subtilis 168 reference genome a decade later.</title>
        <authorList>
            <person name="Barbe V."/>
            <person name="Cruveiller S."/>
            <person name="Kunst F."/>
            <person name="Lenoble P."/>
            <person name="Meurice G."/>
            <person name="Sekowska A."/>
            <person name="Vallenet D."/>
            <person name="Wang T."/>
            <person name="Moszer I."/>
            <person name="Medigue C."/>
            <person name="Danchin A."/>
        </authorList>
    </citation>
    <scope>SEQUENCE REVISION TO 148 AND 230</scope>
</reference>
<gene>
    <name evidence="1" type="primary">truA</name>
    <name type="synonym">ybaH</name>
    <name type="ordered locus">BSU01480</name>
</gene>
<comment type="function">
    <text evidence="1">Formation of pseudouridine at positions 38, 39 and 40 in the anticodon stem and loop of transfer RNAs.</text>
</comment>
<comment type="catalytic activity">
    <reaction evidence="1">
        <text>uridine(38/39/40) in tRNA = pseudouridine(38/39/40) in tRNA</text>
        <dbReference type="Rhea" id="RHEA:22376"/>
        <dbReference type="Rhea" id="RHEA-COMP:10085"/>
        <dbReference type="Rhea" id="RHEA-COMP:10087"/>
        <dbReference type="ChEBI" id="CHEBI:65314"/>
        <dbReference type="ChEBI" id="CHEBI:65315"/>
        <dbReference type="EC" id="5.4.99.12"/>
    </reaction>
</comment>
<comment type="subunit">
    <text evidence="1">Homodimer.</text>
</comment>
<comment type="similarity">
    <text evidence="1">Belongs to the tRNA pseudouridine synthase TruA family.</text>
</comment>
<accession>P70973</accession>
<protein>
    <recommendedName>
        <fullName evidence="1">tRNA pseudouridine synthase A</fullName>
        <ecNumber evidence="1">5.4.99.12</ecNumber>
    </recommendedName>
    <alternativeName>
        <fullName evidence="1">tRNA pseudouridine(38-40) synthase</fullName>
    </alternativeName>
    <alternativeName>
        <fullName evidence="1">tRNA pseudouridylate synthase I</fullName>
    </alternativeName>
    <alternativeName>
        <fullName evidence="1">tRNA-uridine isomerase I</fullName>
    </alternativeName>
</protein>
<name>TRUA_BACSU</name>
<evidence type="ECO:0000255" key="1">
    <source>
        <dbReference type="HAMAP-Rule" id="MF_00171"/>
    </source>
</evidence>
<evidence type="ECO:0000305" key="2"/>
<keyword id="KW-0413">Isomerase</keyword>
<keyword id="KW-1185">Reference proteome</keyword>
<keyword id="KW-0819">tRNA processing</keyword>
<organism>
    <name type="scientific">Bacillus subtilis (strain 168)</name>
    <dbReference type="NCBI Taxonomy" id="224308"/>
    <lineage>
        <taxon>Bacteria</taxon>
        <taxon>Bacillati</taxon>
        <taxon>Bacillota</taxon>
        <taxon>Bacilli</taxon>
        <taxon>Bacillales</taxon>
        <taxon>Bacillaceae</taxon>
        <taxon>Bacillus</taxon>
    </lineage>
</organism>
<proteinExistence type="inferred from homology"/>
<feature type="chain" id="PRO_0000057334" description="tRNA pseudouridine synthase A">
    <location>
        <begin position="1"/>
        <end position="247"/>
    </location>
</feature>
<feature type="active site" description="Nucleophile" evidence="1">
    <location>
        <position position="53"/>
    </location>
</feature>
<feature type="binding site" evidence="1">
    <location>
        <position position="111"/>
    </location>
    <ligand>
        <name>substrate</name>
    </ligand>
</feature>
<feature type="sequence conflict" description="In Ref. 1; BAA10987." evidence="2" ref="1">
    <original>L</original>
    <variation>P</variation>
    <location>
        <position position="148"/>
    </location>
</feature>
<feature type="sequence conflict" description="In Ref. 1; BAA10987." evidence="2" ref="1">
    <original>G</original>
    <variation>E</variation>
    <location>
        <position position="230"/>
    </location>
</feature>
<sequence length="247" mass="27989">MRLKCTISYDGHLFNGYQVQPGKRTVQDELEKALAVLHKSKDRIPVVSSGRTDSGVHAAGQVIHFDTPLSIPAERWPYALNALLPDDIAVKQAEIADDGFHARFSAVKKEYRYFVYTEKHPDVFKRHYAYHFSYRLNVQDMREAAKHLIGTHDFTSFCAAKTEVQDKVRTIYELDWTETADGLQMRITGSGFLYNMVRIIAGTLLDAGIGKISPDEVKSMLEAKDREAAGRTAPGHGLYLWNVYYDN</sequence>
<dbReference type="EC" id="5.4.99.12" evidence="1"/>
<dbReference type="EMBL" id="D64126">
    <property type="protein sequence ID" value="BAA10987.1"/>
    <property type="molecule type" value="Genomic_DNA"/>
</dbReference>
<dbReference type="EMBL" id="AL009126">
    <property type="protein sequence ID" value="CAB11924.2"/>
    <property type="molecule type" value="Genomic_DNA"/>
</dbReference>
<dbReference type="PIR" id="F69726">
    <property type="entry name" value="F69726"/>
</dbReference>
<dbReference type="RefSeq" id="NP_388029.2">
    <property type="nucleotide sequence ID" value="NC_000964.3"/>
</dbReference>
<dbReference type="RefSeq" id="WP_004399657.1">
    <property type="nucleotide sequence ID" value="NZ_OZ025638.1"/>
</dbReference>
<dbReference type="SMR" id="P70973"/>
<dbReference type="FunCoup" id="P70973">
    <property type="interactions" value="672"/>
</dbReference>
<dbReference type="STRING" id="224308.BSU01480"/>
<dbReference type="PaxDb" id="224308-BSU01480"/>
<dbReference type="EnsemblBacteria" id="CAB11924">
    <property type="protein sequence ID" value="CAB11924"/>
    <property type="gene ID" value="BSU_01480"/>
</dbReference>
<dbReference type="GeneID" id="938920"/>
<dbReference type="KEGG" id="bsu:BSU01480"/>
<dbReference type="PATRIC" id="fig|224308.179.peg.152"/>
<dbReference type="eggNOG" id="COG0101">
    <property type="taxonomic scope" value="Bacteria"/>
</dbReference>
<dbReference type="InParanoid" id="P70973"/>
<dbReference type="OrthoDB" id="9811823at2"/>
<dbReference type="PhylomeDB" id="P70973"/>
<dbReference type="BioCyc" id="BSUB:BSU01480-MONOMER"/>
<dbReference type="Proteomes" id="UP000001570">
    <property type="component" value="Chromosome"/>
</dbReference>
<dbReference type="GO" id="GO:0009982">
    <property type="term" value="F:pseudouridine synthase activity"/>
    <property type="evidence" value="ECO:0000318"/>
    <property type="project" value="GO_Central"/>
</dbReference>
<dbReference type="GO" id="GO:0003723">
    <property type="term" value="F:RNA binding"/>
    <property type="evidence" value="ECO:0007669"/>
    <property type="project" value="InterPro"/>
</dbReference>
<dbReference type="GO" id="GO:0160147">
    <property type="term" value="F:tRNA pseudouridine(38-40) synthase activity"/>
    <property type="evidence" value="ECO:0007669"/>
    <property type="project" value="UniProtKB-EC"/>
</dbReference>
<dbReference type="GO" id="GO:0031119">
    <property type="term" value="P:tRNA pseudouridine synthesis"/>
    <property type="evidence" value="ECO:0000318"/>
    <property type="project" value="GO_Central"/>
</dbReference>
<dbReference type="CDD" id="cd02570">
    <property type="entry name" value="PseudoU_synth_EcTruA"/>
    <property type="match status" value="1"/>
</dbReference>
<dbReference type="FunFam" id="3.30.70.580:FF:000001">
    <property type="entry name" value="tRNA pseudouridine synthase A"/>
    <property type="match status" value="1"/>
</dbReference>
<dbReference type="Gene3D" id="3.30.70.660">
    <property type="entry name" value="Pseudouridine synthase I, catalytic domain, C-terminal subdomain"/>
    <property type="match status" value="1"/>
</dbReference>
<dbReference type="Gene3D" id="3.30.70.580">
    <property type="entry name" value="Pseudouridine synthase I, catalytic domain, N-terminal subdomain"/>
    <property type="match status" value="1"/>
</dbReference>
<dbReference type="HAMAP" id="MF_00171">
    <property type="entry name" value="TruA"/>
    <property type="match status" value="1"/>
</dbReference>
<dbReference type="InterPro" id="IPR020103">
    <property type="entry name" value="PsdUridine_synth_cat_dom_sf"/>
</dbReference>
<dbReference type="InterPro" id="IPR001406">
    <property type="entry name" value="PsdUridine_synth_TruA"/>
</dbReference>
<dbReference type="InterPro" id="IPR020097">
    <property type="entry name" value="PsdUridine_synth_TruA_a/b_dom"/>
</dbReference>
<dbReference type="InterPro" id="IPR020095">
    <property type="entry name" value="PsdUridine_synth_TruA_C"/>
</dbReference>
<dbReference type="InterPro" id="IPR020094">
    <property type="entry name" value="TruA/RsuA/RluB/E/F_N"/>
</dbReference>
<dbReference type="NCBIfam" id="TIGR00071">
    <property type="entry name" value="hisT_truA"/>
    <property type="match status" value="1"/>
</dbReference>
<dbReference type="PANTHER" id="PTHR11142">
    <property type="entry name" value="PSEUDOURIDYLATE SYNTHASE"/>
    <property type="match status" value="1"/>
</dbReference>
<dbReference type="PANTHER" id="PTHR11142:SF0">
    <property type="entry name" value="TRNA PSEUDOURIDINE SYNTHASE-LIKE 1"/>
    <property type="match status" value="1"/>
</dbReference>
<dbReference type="Pfam" id="PF01416">
    <property type="entry name" value="PseudoU_synth_1"/>
    <property type="match status" value="2"/>
</dbReference>
<dbReference type="PIRSF" id="PIRSF001430">
    <property type="entry name" value="tRNA_psdUrid_synth"/>
    <property type="match status" value="1"/>
</dbReference>
<dbReference type="SUPFAM" id="SSF55120">
    <property type="entry name" value="Pseudouridine synthase"/>
    <property type="match status" value="1"/>
</dbReference>